<dbReference type="EC" id="5.5.1.4" evidence="2"/>
<dbReference type="EMBL" id="AF284065">
    <property type="protein sequence ID" value="AAG01148.1"/>
    <property type="molecule type" value="mRNA"/>
</dbReference>
<dbReference type="RefSeq" id="NP_001291338.1">
    <property type="nucleotide sequence ID" value="NM_001304409.1"/>
</dbReference>
<dbReference type="SMR" id="Q9FYV1"/>
<dbReference type="FunCoup" id="Q9FYV1">
    <property type="interactions" value="1910"/>
</dbReference>
<dbReference type="EnsemblPlants" id="SIN_1004338.t">
    <property type="protein sequence ID" value="SIN_1004338.t"/>
    <property type="gene ID" value="SIN_1004338"/>
</dbReference>
<dbReference type="GeneID" id="105176482"/>
<dbReference type="Gramene" id="SIN_1004338.t">
    <property type="protein sequence ID" value="SIN_1004338.t"/>
    <property type="gene ID" value="SIN_1004338"/>
</dbReference>
<dbReference type="KEGG" id="sind:105176482"/>
<dbReference type="InParanoid" id="Q9FYV1"/>
<dbReference type="OrthoDB" id="2887at2759"/>
<dbReference type="PhylomeDB" id="Q9FYV1"/>
<dbReference type="UniPathway" id="UPA00823">
    <property type="reaction ID" value="UER00787"/>
</dbReference>
<dbReference type="Proteomes" id="UP000504604">
    <property type="component" value="Linkage group LG13"/>
</dbReference>
<dbReference type="GO" id="GO:0005829">
    <property type="term" value="C:cytosol"/>
    <property type="evidence" value="ECO:0007669"/>
    <property type="project" value="UniProtKB-SubCell"/>
</dbReference>
<dbReference type="GO" id="GO:0005634">
    <property type="term" value="C:nucleus"/>
    <property type="evidence" value="ECO:0007669"/>
    <property type="project" value="UniProtKB-SubCell"/>
</dbReference>
<dbReference type="GO" id="GO:0004512">
    <property type="term" value="F:inositol-3-phosphate synthase activity"/>
    <property type="evidence" value="ECO:0007669"/>
    <property type="project" value="UniProtKB-EC"/>
</dbReference>
<dbReference type="GO" id="GO:0006021">
    <property type="term" value="P:inositol biosynthetic process"/>
    <property type="evidence" value="ECO:0007669"/>
    <property type="project" value="UniProtKB-UniPathway"/>
</dbReference>
<dbReference type="GO" id="GO:0008654">
    <property type="term" value="P:phospholipid biosynthetic process"/>
    <property type="evidence" value="ECO:0007669"/>
    <property type="project" value="UniProtKB-KW"/>
</dbReference>
<dbReference type="FunFam" id="3.40.50.720:FF:000107">
    <property type="entry name" value="inositol-3-phosphate synthase"/>
    <property type="match status" value="1"/>
</dbReference>
<dbReference type="FunFam" id="3.40.50.720:FF:000069">
    <property type="entry name" value="Inositol-3-phosphate synthase 1"/>
    <property type="match status" value="1"/>
</dbReference>
<dbReference type="FunFam" id="3.30.360.10:FF:000055">
    <property type="entry name" value="Putative myo-inositol-1-phosphate synthase"/>
    <property type="match status" value="1"/>
</dbReference>
<dbReference type="Gene3D" id="3.40.50.720">
    <property type="entry name" value="NAD(P)-binding Rossmann-like Domain"/>
    <property type="match status" value="2"/>
</dbReference>
<dbReference type="InterPro" id="IPR002587">
    <property type="entry name" value="Myo-inos-1-P_Synthase"/>
</dbReference>
<dbReference type="InterPro" id="IPR013021">
    <property type="entry name" value="Myo-inos-1-P_Synthase_GAPDH"/>
</dbReference>
<dbReference type="InterPro" id="IPR036291">
    <property type="entry name" value="NAD(P)-bd_dom_sf"/>
</dbReference>
<dbReference type="PANTHER" id="PTHR11510">
    <property type="entry name" value="MYO-INOSITOL-1 PHOSPHATE SYNTHASE"/>
    <property type="match status" value="1"/>
</dbReference>
<dbReference type="Pfam" id="PF01658">
    <property type="entry name" value="Inos-1-P_synth"/>
    <property type="match status" value="1"/>
</dbReference>
<dbReference type="Pfam" id="PF07994">
    <property type="entry name" value="NAD_binding_5"/>
    <property type="match status" value="1"/>
</dbReference>
<dbReference type="PIRSF" id="PIRSF015578">
    <property type="entry name" value="Myoinos-ppht_syn"/>
    <property type="match status" value="1"/>
</dbReference>
<dbReference type="SUPFAM" id="SSF55347">
    <property type="entry name" value="Glyceraldehyde-3-phosphate dehydrogenase-like, C-terminal domain"/>
    <property type="match status" value="1"/>
</dbReference>
<dbReference type="SUPFAM" id="SSF51735">
    <property type="entry name" value="NAD(P)-binding Rossmann-fold domains"/>
    <property type="match status" value="1"/>
</dbReference>
<protein>
    <recommendedName>
        <fullName>Inositol-3-phosphate synthase</fullName>
        <shortName>MIP synthase</shortName>
        <ecNumber evidence="2">5.5.1.4</ecNumber>
    </recommendedName>
    <alternativeName>
        <fullName>Myo-inositol 1-phosphate synthase</fullName>
        <shortName>IPS</shortName>
        <shortName>MI-1-P synthase</shortName>
    </alternativeName>
</protein>
<keyword id="KW-0963">Cytoplasm</keyword>
<keyword id="KW-0398">Inositol biosynthesis</keyword>
<keyword id="KW-0413">Isomerase</keyword>
<keyword id="KW-0444">Lipid biosynthesis</keyword>
<keyword id="KW-0443">Lipid metabolism</keyword>
<keyword id="KW-0520">NAD</keyword>
<keyword id="KW-0539">Nucleus</keyword>
<keyword id="KW-0594">Phospholipid biosynthesis</keyword>
<keyword id="KW-1208">Phospholipid metabolism</keyword>
<keyword id="KW-1185">Reference proteome</keyword>
<evidence type="ECO:0000250" key="1">
    <source>
        <dbReference type="UniProtKB" id="P11986"/>
    </source>
</evidence>
<evidence type="ECO:0000250" key="2">
    <source>
        <dbReference type="UniProtKB" id="P42801"/>
    </source>
</evidence>
<evidence type="ECO:0000305" key="3"/>
<feature type="chain" id="PRO_0000195197" description="Inositol-3-phosphate synthase">
    <location>
        <begin position="1"/>
        <end position="510"/>
    </location>
</feature>
<feature type="binding site" evidence="1">
    <location>
        <position position="70"/>
    </location>
    <ligand>
        <name>NAD(+)</name>
        <dbReference type="ChEBI" id="CHEBI:57540"/>
    </ligand>
</feature>
<feature type="binding site" evidence="1">
    <location>
        <position position="71"/>
    </location>
    <ligand>
        <name>NAD(+)</name>
        <dbReference type="ChEBI" id="CHEBI:57540"/>
    </ligand>
</feature>
<feature type="binding site" evidence="1">
    <location>
        <position position="72"/>
    </location>
    <ligand>
        <name>NAD(+)</name>
        <dbReference type="ChEBI" id="CHEBI:57540"/>
    </ligand>
</feature>
<feature type="binding site" evidence="1">
    <location>
        <position position="73"/>
    </location>
    <ligand>
        <name>NAD(+)</name>
        <dbReference type="ChEBI" id="CHEBI:57540"/>
    </ligand>
</feature>
<feature type="binding site" evidence="1">
    <location>
        <position position="143"/>
    </location>
    <ligand>
        <name>NAD(+)</name>
        <dbReference type="ChEBI" id="CHEBI:57540"/>
    </ligand>
</feature>
<feature type="binding site" evidence="1">
    <location>
        <position position="180"/>
    </location>
    <ligand>
        <name>NAD(+)</name>
        <dbReference type="ChEBI" id="CHEBI:57540"/>
    </ligand>
</feature>
<feature type="binding site" evidence="1">
    <location>
        <position position="190"/>
    </location>
    <ligand>
        <name>NAD(+)</name>
        <dbReference type="ChEBI" id="CHEBI:57540"/>
    </ligand>
</feature>
<feature type="binding site" evidence="1">
    <location>
        <position position="193"/>
    </location>
    <ligand>
        <name>NAD(+)</name>
        <dbReference type="ChEBI" id="CHEBI:57540"/>
    </ligand>
</feature>
<feature type="binding site" evidence="1">
    <location>
        <position position="230"/>
    </location>
    <ligand>
        <name>NAD(+)</name>
        <dbReference type="ChEBI" id="CHEBI:57540"/>
    </ligand>
</feature>
<feature type="binding site" evidence="1">
    <location>
        <position position="231"/>
    </location>
    <ligand>
        <name>NAD(+)</name>
        <dbReference type="ChEBI" id="CHEBI:57540"/>
    </ligand>
</feature>
<feature type="binding site" evidence="1">
    <location>
        <position position="232"/>
    </location>
    <ligand>
        <name>NAD(+)</name>
        <dbReference type="ChEBI" id="CHEBI:57540"/>
    </ligand>
</feature>
<feature type="binding site" evidence="1">
    <location>
        <position position="233"/>
    </location>
    <ligand>
        <name>NAD(+)</name>
        <dbReference type="ChEBI" id="CHEBI:57540"/>
    </ligand>
</feature>
<feature type="binding site" evidence="1">
    <location>
        <position position="281"/>
    </location>
    <ligand>
        <name>NAD(+)</name>
        <dbReference type="ChEBI" id="CHEBI:57540"/>
    </ligand>
</feature>
<feature type="binding site" evidence="1">
    <location>
        <position position="282"/>
    </location>
    <ligand>
        <name>NAD(+)</name>
        <dbReference type="ChEBI" id="CHEBI:57540"/>
    </ligand>
</feature>
<feature type="binding site" evidence="1">
    <location>
        <position position="306"/>
    </location>
    <ligand>
        <name>NAD(+)</name>
        <dbReference type="ChEBI" id="CHEBI:57540"/>
    </ligand>
</feature>
<feature type="binding site" evidence="1">
    <location>
        <position position="309"/>
    </location>
    <ligand>
        <name>NAD(+)</name>
        <dbReference type="ChEBI" id="CHEBI:57540"/>
    </ligand>
</feature>
<feature type="binding site" evidence="1">
    <location>
        <position position="340"/>
    </location>
    <ligand>
        <name>NAD(+)</name>
        <dbReference type="ChEBI" id="CHEBI:57540"/>
    </ligand>
</feature>
<feature type="binding site" evidence="1">
    <location>
        <position position="341"/>
    </location>
    <ligand>
        <name>NAD(+)</name>
        <dbReference type="ChEBI" id="CHEBI:57540"/>
    </ligand>
</feature>
<feature type="binding site" evidence="1">
    <location>
        <position position="342"/>
    </location>
    <ligand>
        <name>NAD(+)</name>
        <dbReference type="ChEBI" id="CHEBI:57540"/>
    </ligand>
</feature>
<feature type="binding site" evidence="1">
    <location>
        <position position="355"/>
    </location>
    <ligand>
        <name>NAD(+)</name>
        <dbReference type="ChEBI" id="CHEBI:57540"/>
    </ligand>
</feature>
<feature type="binding site" evidence="1">
    <location>
        <position position="393"/>
    </location>
    <ligand>
        <name>NAD(+)</name>
        <dbReference type="ChEBI" id="CHEBI:57540"/>
    </ligand>
</feature>
<feature type="binding site" evidence="1">
    <location>
        <position position="394"/>
    </location>
    <ligand>
        <name>NAD(+)</name>
        <dbReference type="ChEBI" id="CHEBI:57540"/>
    </ligand>
</feature>
<feature type="binding site" evidence="1">
    <location>
        <position position="422"/>
    </location>
    <ligand>
        <name>NAD(+)</name>
        <dbReference type="ChEBI" id="CHEBI:57540"/>
    </ligand>
</feature>
<feature type="binding site" evidence="1">
    <location>
        <position position="423"/>
    </location>
    <ligand>
        <name>NAD(+)</name>
        <dbReference type="ChEBI" id="CHEBI:57540"/>
    </ligand>
</feature>
<accession>Q9FYV1</accession>
<name>INO1_SESIN</name>
<sequence>MFIESFKVESPNVKYTEGEIHSVYNYETTELVHESRNGTYQWIVKPKTVKYEFKTDTHVPKLGVMLVGWGGNNGSTLTGGVIANREGISWATKDKVQQANYFGSLTQASSIRVGSFNGEEIYAPFKSLLPMVNPDDVVFGGWDISNMNLADAMGRAKVLDIDLQKQLRPYMEHMVPLPGIYDPDFIAANQGSRANNVIKGTKKEQVQQIIKDMRDFKEQNKVDKVVVLWTANTERYSNVVVGLNDTAESLMASVERNEAEISPSTLYAIACVFENVPFINGSPQNTFVPGLIDLAIQRNSLIGGDDFKSGQTKMKSVLVDFLVGAGIKPTSIVSYNHLGNNDGMNLSAPQTFRSKEISKSNVVDDMVASNGILYEPGEHPDHIVVIKYVPYVGDSKRAMDEYTSEIFMGGKSTIVLHNTCEDSLLAAPIILDLVLLAELSTRIQLKAEGEGKFHSFHPVATILSYLTKAPLVPPGTPVVNALSKQRAMLENILRACVGLAPENNMILEYK</sequence>
<comment type="function">
    <text evidence="2">Key enzyme in myo-inositol biosynthesis pathway that catalyzes the conversion of glucose 6-phosphate to 1-myo-inositol 1-phosphate in a NAD-dependent manner.</text>
</comment>
<comment type="catalytic activity">
    <reaction evidence="2">
        <text>D-glucose 6-phosphate = 1D-myo-inositol 3-phosphate</text>
        <dbReference type="Rhea" id="RHEA:10716"/>
        <dbReference type="ChEBI" id="CHEBI:58401"/>
        <dbReference type="ChEBI" id="CHEBI:61548"/>
        <dbReference type="EC" id="5.5.1.4"/>
    </reaction>
</comment>
<comment type="cofactor">
    <cofactor evidence="2">
        <name>NAD(+)</name>
        <dbReference type="ChEBI" id="CHEBI:57540"/>
    </cofactor>
</comment>
<comment type="pathway">
    <text>Polyol metabolism; myo-inositol biosynthesis; myo-inositol from D-glucose 6-phosphate: step 1/2.</text>
</comment>
<comment type="subcellular location">
    <subcellularLocation>
        <location evidence="2">Cytoplasm</location>
        <location evidence="2">Cytosol</location>
    </subcellularLocation>
    <subcellularLocation>
        <location evidence="2">Nucleus</location>
    </subcellularLocation>
</comment>
<comment type="similarity">
    <text evidence="3">Belongs to the myo-inositol 1-phosphate synthase family.</text>
</comment>
<proteinExistence type="evidence at transcript level"/>
<organism>
    <name type="scientific">Sesamum indicum</name>
    <name type="common">Oriental sesame</name>
    <name type="synonym">Sesamum orientale</name>
    <dbReference type="NCBI Taxonomy" id="4182"/>
    <lineage>
        <taxon>Eukaryota</taxon>
        <taxon>Viridiplantae</taxon>
        <taxon>Streptophyta</taxon>
        <taxon>Embryophyta</taxon>
        <taxon>Tracheophyta</taxon>
        <taxon>Spermatophyta</taxon>
        <taxon>Magnoliopsida</taxon>
        <taxon>eudicotyledons</taxon>
        <taxon>Gunneridae</taxon>
        <taxon>Pentapetalae</taxon>
        <taxon>asterids</taxon>
        <taxon>lamiids</taxon>
        <taxon>Lamiales</taxon>
        <taxon>Pedaliaceae</taxon>
        <taxon>Sesamum</taxon>
    </lineage>
</organism>
<reference key="1">
    <citation type="submission" date="2000-07" db="EMBL/GenBank/DDBJ databases">
        <title>Characterization and functional analysis of a myo-inositol 1-phosphate synthase cDNA from sesame (Sesamum indicum L.) seeds.</title>
        <authorList>
            <person name="Jin U.-H."/>
            <person name="Chung C.-H."/>
        </authorList>
    </citation>
    <scope>NUCLEOTIDE SEQUENCE [MRNA]</scope>
    <source>
        <tissue>Seed</tissue>
    </source>
</reference>